<feature type="chain" id="PRO_0000407839" description="Nucleolar protein 9">
    <location>
        <begin position="1"/>
        <end position="666"/>
    </location>
</feature>
<feature type="repeat" description="Pumilio 1">
    <location>
        <begin position="92"/>
        <end position="127"/>
    </location>
</feature>
<feature type="repeat" description="Pumilio 2">
    <location>
        <begin position="128"/>
        <end position="163"/>
    </location>
</feature>
<feature type="repeat" description="Pumilio 3">
    <location>
        <begin position="188"/>
        <end position="223"/>
    </location>
</feature>
<feature type="repeat" description="Pumilio 4">
    <location>
        <begin position="286"/>
        <end position="326"/>
    </location>
</feature>
<feature type="repeat" description="Pumilio 5">
    <location>
        <begin position="334"/>
        <end position="369"/>
    </location>
</feature>
<feature type="repeat" description="Pumilio 6">
    <location>
        <begin position="370"/>
        <end position="407"/>
    </location>
</feature>
<feature type="repeat" description="Pumilio 7">
    <location>
        <begin position="511"/>
        <end position="548"/>
    </location>
</feature>
<feature type="repeat" description="Pumilio 8">
    <location>
        <begin position="549"/>
        <end position="587"/>
    </location>
</feature>
<feature type="region of interest" description="Disordered" evidence="2">
    <location>
        <begin position="1"/>
        <end position="40"/>
    </location>
</feature>
<feature type="region of interest" description="Disordered" evidence="2">
    <location>
        <begin position="635"/>
        <end position="666"/>
    </location>
</feature>
<feature type="compositionally biased region" description="Basic residues" evidence="2">
    <location>
        <begin position="1"/>
        <end position="14"/>
    </location>
</feature>
<feature type="compositionally biased region" description="Basic and acidic residues" evidence="2">
    <location>
        <begin position="642"/>
        <end position="653"/>
    </location>
</feature>
<comment type="function">
    <text evidence="1">RNA-binding nucleolar protein required for pre-rRNA processing. Component of the 90S pre-ribosome involved in production of 18S rRNA and assembly of small ribosomal subunit. Component of the pre-40S ribosome required for release from the nucleolus (By similarity).</text>
</comment>
<comment type="subunit">
    <text evidence="1">Component of the 90S pre-ribosome. Component of the pre-40S ribosome.</text>
</comment>
<comment type="subcellular location">
    <subcellularLocation>
        <location evidence="1">Nucleus</location>
        <location evidence="1">Nucleolus</location>
    </subcellularLocation>
</comment>
<comment type="similarity">
    <text evidence="3">Belongs to the NOP9 family.</text>
</comment>
<organism>
    <name type="scientific">Saccharomyces cerevisiae (strain JAY291)</name>
    <name type="common">Baker's yeast</name>
    <dbReference type="NCBI Taxonomy" id="574961"/>
    <lineage>
        <taxon>Eukaryota</taxon>
        <taxon>Fungi</taxon>
        <taxon>Dikarya</taxon>
        <taxon>Ascomycota</taxon>
        <taxon>Saccharomycotina</taxon>
        <taxon>Saccharomycetes</taxon>
        <taxon>Saccharomycetales</taxon>
        <taxon>Saccharomycetaceae</taxon>
        <taxon>Saccharomyces</taxon>
    </lineage>
</organism>
<gene>
    <name type="primary">NOP9</name>
    <name type="ORF">C1Q_04326</name>
</gene>
<dbReference type="EMBL" id="ACFL01000338">
    <property type="protein sequence ID" value="EEU05331.1"/>
    <property type="molecule type" value="Genomic_DNA"/>
</dbReference>
<dbReference type="SMR" id="C7GV42"/>
<dbReference type="Proteomes" id="UP000008073">
    <property type="component" value="Unassembled WGS sequence"/>
</dbReference>
<dbReference type="GO" id="GO:0030686">
    <property type="term" value="C:90S preribosome"/>
    <property type="evidence" value="ECO:0007669"/>
    <property type="project" value="TreeGrafter"/>
</dbReference>
<dbReference type="GO" id="GO:0005730">
    <property type="term" value="C:nucleolus"/>
    <property type="evidence" value="ECO:0007669"/>
    <property type="project" value="UniProtKB-SubCell"/>
</dbReference>
<dbReference type="GO" id="GO:0030688">
    <property type="term" value="C:preribosome, small subunit precursor"/>
    <property type="evidence" value="ECO:0007669"/>
    <property type="project" value="TreeGrafter"/>
</dbReference>
<dbReference type="GO" id="GO:0003723">
    <property type="term" value="F:RNA binding"/>
    <property type="evidence" value="ECO:0007669"/>
    <property type="project" value="InterPro"/>
</dbReference>
<dbReference type="GO" id="GO:0000480">
    <property type="term" value="P:endonucleolytic cleavage in 5'-ETS of tricistronic rRNA transcript (SSU-rRNA, 5.8S rRNA, LSU-rRNA)"/>
    <property type="evidence" value="ECO:0007669"/>
    <property type="project" value="TreeGrafter"/>
</dbReference>
<dbReference type="GO" id="GO:0000447">
    <property type="term" value="P:endonucleolytic cleavage in ITS1 to separate SSU-rRNA from 5.8S rRNA and LSU-rRNA from tricistronic rRNA transcript (SSU-rRNA, 5.8S rRNA, LSU-rRNA)"/>
    <property type="evidence" value="ECO:0007669"/>
    <property type="project" value="TreeGrafter"/>
</dbReference>
<dbReference type="GO" id="GO:0000472">
    <property type="term" value="P:endonucleolytic cleavage to generate mature 5'-end of SSU-rRNA from (SSU-rRNA, 5.8S rRNA, LSU-rRNA)"/>
    <property type="evidence" value="ECO:0007669"/>
    <property type="project" value="TreeGrafter"/>
</dbReference>
<dbReference type="GO" id="GO:0000056">
    <property type="term" value="P:ribosomal small subunit export from nucleus"/>
    <property type="evidence" value="ECO:0007669"/>
    <property type="project" value="TreeGrafter"/>
</dbReference>
<dbReference type="FunFam" id="1.25.10.10:FF:000647">
    <property type="entry name" value="Nucleolar protein 9"/>
    <property type="match status" value="1"/>
</dbReference>
<dbReference type="FunFam" id="1.25.10.10:FF:000684">
    <property type="entry name" value="Nucleolar protein 9"/>
    <property type="match status" value="1"/>
</dbReference>
<dbReference type="Gene3D" id="1.25.10.10">
    <property type="entry name" value="Leucine-rich Repeat Variant"/>
    <property type="match status" value="3"/>
</dbReference>
<dbReference type="InterPro" id="IPR011989">
    <property type="entry name" value="ARM-like"/>
</dbReference>
<dbReference type="InterPro" id="IPR016024">
    <property type="entry name" value="ARM-type_fold"/>
</dbReference>
<dbReference type="InterPro" id="IPR040000">
    <property type="entry name" value="NOP9"/>
</dbReference>
<dbReference type="InterPro" id="IPR001313">
    <property type="entry name" value="Pumilio_RNA-bd_rpt"/>
</dbReference>
<dbReference type="PANTHER" id="PTHR13102">
    <property type="entry name" value="NUCLEOLAR PROTEIN 9"/>
    <property type="match status" value="1"/>
</dbReference>
<dbReference type="PANTHER" id="PTHR13102:SF0">
    <property type="entry name" value="NUCLEOLAR PROTEIN 9"/>
    <property type="match status" value="1"/>
</dbReference>
<dbReference type="Pfam" id="PF22493">
    <property type="entry name" value="PUF_NOP9"/>
    <property type="match status" value="1"/>
</dbReference>
<dbReference type="SMART" id="SM00025">
    <property type="entry name" value="Pumilio"/>
    <property type="match status" value="8"/>
</dbReference>
<dbReference type="SUPFAM" id="SSF48371">
    <property type="entry name" value="ARM repeat"/>
    <property type="match status" value="1"/>
</dbReference>
<sequence length="666" mass="77722">MGKTKTRGRRHQDKQRKDEFEPSSNSAKEHIQQEESTYNDEAEIKETQPQMFFGVLDREELEYFKQAESTLQLDAFEAPEEKFQFVTSIIEEAKGKELKLVTSQITSKLMERVILECDETQLKDIFQSFNGVFFGLSCHKYASHVLETLFVRSAALVERELLTPSFDNNEKEGPYVTMENMFLFMLNELKPHLKTMMNHQYASHVLRLLILILSSKTLPNSTKANSTLRSKKSKIARKMIDIKDNDDFNKVYQTPESFKSELRDIITTLYKGFTNGAESRSDISQSTITKFREYSVDKVASPVIQLIIQVEGIFDRDRSFWRLVFNTADEKDPKEESFLEYLLSDPVGSHFLENVIGSARLKYVERLYRLYMKDRIVKLAKRDTTGAFVVRALLEHLKEKDVKQILDAVVPELSMLLNSNMDFGTAIINASNKQGGYLRDDVIAQLIQKYYPEKSDAKNILESCLLLSASTLGNTRDDWPTAEERRRSVFLEQLIDYDDKFLNITIDSMLALPEERLIQMCYHGVFSHVVEHVLQTTRVDIIKRKMLLNILSKESVNLACNVYGSHIMDKLWEFTAKLTLYKERIARALVLETEKVKNSIYGRQVWKNWKLELYVRKMWDWKKLIKEQEFEIFPNSKPLQPKPEKHSRERNNSKEGSAFKKQKHYR</sequence>
<proteinExistence type="inferred from homology"/>
<keyword id="KW-0539">Nucleus</keyword>
<keyword id="KW-0677">Repeat</keyword>
<keyword id="KW-0690">Ribosome biogenesis</keyword>
<keyword id="KW-0698">rRNA processing</keyword>
<evidence type="ECO:0000250" key="1"/>
<evidence type="ECO:0000256" key="2">
    <source>
        <dbReference type="SAM" id="MobiDB-lite"/>
    </source>
</evidence>
<evidence type="ECO:0000305" key="3"/>
<name>NOP9_YEAS2</name>
<reference key="1">
    <citation type="journal article" date="2009" name="Genome Res.">
        <title>Genome structure of a Saccharomyces cerevisiae strain widely used in bioethanol production.</title>
        <authorList>
            <person name="Argueso J.L."/>
            <person name="Carazzolle M.F."/>
            <person name="Mieczkowski P.A."/>
            <person name="Duarte F.M."/>
            <person name="Netto O.V.C."/>
            <person name="Missawa S.K."/>
            <person name="Galzerani F."/>
            <person name="Costa G.G.L."/>
            <person name="Vidal R.O."/>
            <person name="Noronha M.F."/>
            <person name="Dominska M."/>
            <person name="Andrietta M.G.S."/>
            <person name="Andrietta S.R."/>
            <person name="Cunha A.F."/>
            <person name="Gomes L.H."/>
            <person name="Tavares F.C.A."/>
            <person name="Alcarde A.R."/>
            <person name="Dietrich F.S."/>
            <person name="McCusker J.H."/>
            <person name="Petes T.D."/>
            <person name="Pereira G.A.G."/>
        </authorList>
    </citation>
    <scope>NUCLEOTIDE SEQUENCE [LARGE SCALE GENOMIC DNA]</scope>
    <source>
        <strain>JAY291</strain>
    </source>
</reference>
<protein>
    <recommendedName>
        <fullName>Nucleolar protein 9</fullName>
    </recommendedName>
    <alternativeName>
        <fullName>Pumilio domain-containing protein NOP9</fullName>
    </alternativeName>
</protein>
<accession>C7GV42</accession>